<organism>
    <name type="scientific">Pseudomonas aeruginosa (strain UCBPP-PA14)</name>
    <dbReference type="NCBI Taxonomy" id="208963"/>
    <lineage>
        <taxon>Bacteria</taxon>
        <taxon>Pseudomonadati</taxon>
        <taxon>Pseudomonadota</taxon>
        <taxon>Gammaproteobacteria</taxon>
        <taxon>Pseudomonadales</taxon>
        <taxon>Pseudomonadaceae</taxon>
        <taxon>Pseudomonas</taxon>
    </lineage>
</organism>
<name>PDXB_PSEAB</name>
<evidence type="ECO:0000255" key="1">
    <source>
        <dbReference type="HAMAP-Rule" id="MF_01825"/>
    </source>
</evidence>
<dbReference type="EC" id="1.1.1.290" evidence="1"/>
<dbReference type="EMBL" id="CP000438">
    <property type="protein sequence ID" value="ABJ10569.1"/>
    <property type="molecule type" value="Genomic_DNA"/>
</dbReference>
<dbReference type="RefSeq" id="WP_003140321.1">
    <property type="nucleotide sequence ID" value="NZ_CP034244.1"/>
</dbReference>
<dbReference type="SMR" id="Q02JM2"/>
<dbReference type="KEGG" id="pau:PA14_46470"/>
<dbReference type="PseudoCAP" id="PA14_46470"/>
<dbReference type="HOGENOM" id="CLU_019796_4_0_6"/>
<dbReference type="BioCyc" id="PAER208963:G1G74-3897-MONOMER"/>
<dbReference type="UniPathway" id="UPA00244">
    <property type="reaction ID" value="UER00310"/>
</dbReference>
<dbReference type="Proteomes" id="UP000000653">
    <property type="component" value="Chromosome"/>
</dbReference>
<dbReference type="GO" id="GO:0005829">
    <property type="term" value="C:cytosol"/>
    <property type="evidence" value="ECO:0007669"/>
    <property type="project" value="TreeGrafter"/>
</dbReference>
<dbReference type="GO" id="GO:0033711">
    <property type="term" value="F:4-phosphoerythronate dehydrogenase activity"/>
    <property type="evidence" value="ECO:0007669"/>
    <property type="project" value="UniProtKB-EC"/>
</dbReference>
<dbReference type="GO" id="GO:0051287">
    <property type="term" value="F:NAD binding"/>
    <property type="evidence" value="ECO:0007669"/>
    <property type="project" value="InterPro"/>
</dbReference>
<dbReference type="GO" id="GO:0046983">
    <property type="term" value="F:protein dimerization activity"/>
    <property type="evidence" value="ECO:0007669"/>
    <property type="project" value="InterPro"/>
</dbReference>
<dbReference type="GO" id="GO:0036001">
    <property type="term" value="P:'de novo' pyridoxal 5'-phosphate biosynthetic process"/>
    <property type="evidence" value="ECO:0007669"/>
    <property type="project" value="TreeGrafter"/>
</dbReference>
<dbReference type="GO" id="GO:0008615">
    <property type="term" value="P:pyridoxine biosynthetic process"/>
    <property type="evidence" value="ECO:0007669"/>
    <property type="project" value="UniProtKB-UniRule"/>
</dbReference>
<dbReference type="CDD" id="cd12158">
    <property type="entry name" value="ErythrP_dh"/>
    <property type="match status" value="1"/>
</dbReference>
<dbReference type="FunFam" id="3.40.50.720:FF:000093">
    <property type="entry name" value="Erythronate-4-phosphate dehydrogenase"/>
    <property type="match status" value="1"/>
</dbReference>
<dbReference type="Gene3D" id="3.30.1370.170">
    <property type="match status" value="1"/>
</dbReference>
<dbReference type="Gene3D" id="3.40.50.720">
    <property type="entry name" value="NAD(P)-binding Rossmann-like Domain"/>
    <property type="match status" value="2"/>
</dbReference>
<dbReference type="HAMAP" id="MF_01825">
    <property type="entry name" value="PdxB"/>
    <property type="match status" value="1"/>
</dbReference>
<dbReference type="InterPro" id="IPR006139">
    <property type="entry name" value="D-isomer_2_OHA_DH_cat_dom"/>
</dbReference>
<dbReference type="InterPro" id="IPR029753">
    <property type="entry name" value="D-isomer_DH_CS"/>
</dbReference>
<dbReference type="InterPro" id="IPR006140">
    <property type="entry name" value="D-isomer_DH_NAD-bd"/>
</dbReference>
<dbReference type="InterPro" id="IPR020921">
    <property type="entry name" value="Erythronate-4-P_DHase"/>
</dbReference>
<dbReference type="InterPro" id="IPR024531">
    <property type="entry name" value="Erythronate-4-P_DHase_dimer"/>
</dbReference>
<dbReference type="InterPro" id="IPR036291">
    <property type="entry name" value="NAD(P)-bd_dom_sf"/>
</dbReference>
<dbReference type="InterPro" id="IPR038251">
    <property type="entry name" value="PdxB_dimer_sf"/>
</dbReference>
<dbReference type="NCBIfam" id="NF001309">
    <property type="entry name" value="PRK00257.1"/>
    <property type="match status" value="1"/>
</dbReference>
<dbReference type="PANTHER" id="PTHR42938">
    <property type="entry name" value="FORMATE DEHYDROGENASE 1"/>
    <property type="match status" value="1"/>
</dbReference>
<dbReference type="PANTHER" id="PTHR42938:SF9">
    <property type="entry name" value="FORMATE DEHYDROGENASE 1"/>
    <property type="match status" value="1"/>
</dbReference>
<dbReference type="Pfam" id="PF00389">
    <property type="entry name" value="2-Hacid_dh"/>
    <property type="match status" value="1"/>
</dbReference>
<dbReference type="Pfam" id="PF02826">
    <property type="entry name" value="2-Hacid_dh_C"/>
    <property type="match status" value="1"/>
</dbReference>
<dbReference type="Pfam" id="PF11890">
    <property type="entry name" value="DUF3410"/>
    <property type="match status" value="1"/>
</dbReference>
<dbReference type="SUPFAM" id="SSF52283">
    <property type="entry name" value="Formate/glycerate dehydrogenase catalytic domain-like"/>
    <property type="match status" value="1"/>
</dbReference>
<dbReference type="SUPFAM" id="SSF51735">
    <property type="entry name" value="NAD(P)-binding Rossmann-fold domains"/>
    <property type="match status" value="1"/>
</dbReference>
<dbReference type="PROSITE" id="PS00671">
    <property type="entry name" value="D_2_HYDROXYACID_DH_3"/>
    <property type="match status" value="1"/>
</dbReference>
<sequence>MRILADENIPVVDAFFADQGSIRRLPGRAIDRAALAEVDVLLVRSVTEVSRAALAGSPVRFVGTCTIGTDHLDLDYFAEAGIAWSSAPGCNARGVVDYVLGCLLAMAEVRGADLAERTYGVVGAGQVGGRLVEVLRGLGWKVLVCDPPRQAREPDGEFVSLERLLAEADVISLHTPLNRDGEHPTRHLLDEPRLAALRPGTWLVNASRGAVVDNQALRRLLEGGADLEVALDVWEGEPQADPELAAHCLIATPHIAGYSLEGKLRGTAQIYQAYCAWRGIAERVSLQDVLPETWLAGLQLNPGCDPAWALATLCRAVYDPRSDDAAFRRSLTGDSATRRAAFDALRKHYPPRREITGLRVATGGRVELQRVVRALGAQLV</sequence>
<comment type="function">
    <text evidence="1">Catalyzes the oxidation of erythronate-4-phosphate to 3-hydroxy-2-oxo-4-phosphonooxybutanoate.</text>
</comment>
<comment type="catalytic activity">
    <reaction evidence="1">
        <text>4-phospho-D-erythronate + NAD(+) = (R)-3-hydroxy-2-oxo-4-phosphooxybutanoate + NADH + H(+)</text>
        <dbReference type="Rhea" id="RHEA:18829"/>
        <dbReference type="ChEBI" id="CHEBI:15378"/>
        <dbReference type="ChEBI" id="CHEBI:57540"/>
        <dbReference type="ChEBI" id="CHEBI:57945"/>
        <dbReference type="ChEBI" id="CHEBI:58538"/>
        <dbReference type="ChEBI" id="CHEBI:58766"/>
        <dbReference type="EC" id="1.1.1.290"/>
    </reaction>
</comment>
<comment type="pathway">
    <text evidence="1">Cofactor biosynthesis; pyridoxine 5'-phosphate biosynthesis; pyridoxine 5'-phosphate from D-erythrose 4-phosphate: step 2/5.</text>
</comment>
<comment type="subunit">
    <text evidence="1">Homodimer.</text>
</comment>
<comment type="subcellular location">
    <subcellularLocation>
        <location evidence="1">Cytoplasm</location>
    </subcellularLocation>
</comment>
<comment type="similarity">
    <text evidence="1">Belongs to the D-isomer specific 2-hydroxyacid dehydrogenase family. PdxB subfamily.</text>
</comment>
<reference key="1">
    <citation type="journal article" date="2006" name="Genome Biol.">
        <title>Genomic analysis reveals that Pseudomonas aeruginosa virulence is combinatorial.</title>
        <authorList>
            <person name="Lee D.G."/>
            <person name="Urbach J.M."/>
            <person name="Wu G."/>
            <person name="Liberati N.T."/>
            <person name="Feinbaum R.L."/>
            <person name="Miyata S."/>
            <person name="Diggins L.T."/>
            <person name="He J."/>
            <person name="Saucier M."/>
            <person name="Deziel E."/>
            <person name="Friedman L."/>
            <person name="Li L."/>
            <person name="Grills G."/>
            <person name="Montgomery K."/>
            <person name="Kucherlapati R."/>
            <person name="Rahme L.G."/>
            <person name="Ausubel F.M."/>
        </authorList>
    </citation>
    <scope>NUCLEOTIDE SEQUENCE [LARGE SCALE GENOMIC DNA]</scope>
    <source>
        <strain>UCBPP-PA14</strain>
    </source>
</reference>
<proteinExistence type="inferred from homology"/>
<keyword id="KW-0963">Cytoplasm</keyword>
<keyword id="KW-0520">NAD</keyword>
<keyword id="KW-0560">Oxidoreductase</keyword>
<keyword id="KW-0664">Pyridoxine biosynthesis</keyword>
<accession>Q02JM2</accession>
<gene>
    <name evidence="1" type="primary">pdxB</name>
    <name type="ordered locus">PA14_46470</name>
</gene>
<feature type="chain" id="PRO_0000297450" description="Erythronate-4-phosphate dehydrogenase">
    <location>
        <begin position="1"/>
        <end position="380"/>
    </location>
</feature>
<feature type="active site" evidence="1">
    <location>
        <position position="208"/>
    </location>
</feature>
<feature type="active site" evidence="1">
    <location>
        <position position="237"/>
    </location>
</feature>
<feature type="active site" description="Proton donor" evidence="1">
    <location>
        <position position="254"/>
    </location>
</feature>
<feature type="binding site" evidence="1">
    <location>
        <position position="45"/>
    </location>
    <ligand>
        <name>substrate</name>
    </ligand>
</feature>
<feature type="binding site" evidence="1">
    <location>
        <position position="66"/>
    </location>
    <ligand>
        <name>substrate</name>
    </ligand>
</feature>
<feature type="binding site" evidence="1">
    <location>
        <begin position="126"/>
        <end position="127"/>
    </location>
    <ligand>
        <name>NAD(+)</name>
        <dbReference type="ChEBI" id="CHEBI:57540"/>
    </ligand>
</feature>
<feature type="binding site" evidence="1">
    <location>
        <position position="146"/>
    </location>
    <ligand>
        <name>NAD(+)</name>
        <dbReference type="ChEBI" id="CHEBI:57540"/>
    </ligand>
</feature>
<feature type="binding site" evidence="1">
    <location>
        <position position="175"/>
    </location>
    <ligand>
        <name>NAD(+)</name>
        <dbReference type="ChEBI" id="CHEBI:57540"/>
    </ligand>
</feature>
<feature type="binding site" evidence="1">
    <location>
        <begin position="206"/>
        <end position="208"/>
    </location>
    <ligand>
        <name>NAD(+)</name>
        <dbReference type="ChEBI" id="CHEBI:57540"/>
    </ligand>
</feature>
<feature type="binding site" evidence="1">
    <location>
        <position position="232"/>
    </location>
    <ligand>
        <name>NAD(+)</name>
        <dbReference type="ChEBI" id="CHEBI:57540"/>
    </ligand>
</feature>
<feature type="binding site" evidence="1">
    <location>
        <position position="257"/>
    </location>
    <ligand>
        <name>NAD(+)</name>
        <dbReference type="ChEBI" id="CHEBI:57540"/>
    </ligand>
</feature>
<feature type="binding site" evidence="1">
    <location>
        <position position="258"/>
    </location>
    <ligand>
        <name>substrate</name>
    </ligand>
</feature>
<protein>
    <recommendedName>
        <fullName evidence="1">Erythronate-4-phosphate dehydrogenase</fullName>
        <ecNumber evidence="1">1.1.1.290</ecNumber>
    </recommendedName>
</protein>